<accession>Q2FUQ4</accession>
<keyword id="KW-0963">Cytoplasm</keyword>
<keyword id="KW-0489">Methyltransferase</keyword>
<keyword id="KW-1185">Reference proteome</keyword>
<keyword id="KW-0698">rRNA processing</keyword>
<keyword id="KW-0949">S-adenosyl-L-methionine</keyword>
<keyword id="KW-0808">Transferase</keyword>
<protein>
    <recommendedName>
        <fullName evidence="1">Ribosomal RNA small subunit methyltransferase G</fullName>
        <ecNumber evidence="1">2.1.1.-</ecNumber>
    </recommendedName>
    <alternativeName>
        <fullName evidence="1">16S rRNA 7-methylguanosine methyltransferase</fullName>
        <shortName evidence="1">16S rRNA m7G methyltransferase</shortName>
    </alternativeName>
</protein>
<sequence length="239" mass="27359">MTVEWLAEQLKEHNIQLTETQKQQFQTYYRLLVEWNEKMNLTSITDEHDVYLKHFYDSIAPSFYFDFNQPISICDVGAGAGFPSIPLKIMFPQLKVTIVDSLNKRIQFLNHLASELQLQDVSFIHDRAETFGKGVYRESYDVVTARAVARLSVLSELCLPLVKKGGQFVALKSSKGEEELEEAKFAISVLGGNVTETHTFELPEDAGERQMFIIDKKRQTPKKYPRKPGTPNKTPLLEK</sequence>
<organism>
    <name type="scientific">Staphylococcus aureus (strain NCTC 8325 / PS 47)</name>
    <dbReference type="NCBI Taxonomy" id="93061"/>
    <lineage>
        <taxon>Bacteria</taxon>
        <taxon>Bacillati</taxon>
        <taxon>Bacillota</taxon>
        <taxon>Bacilli</taxon>
        <taxon>Bacillales</taxon>
        <taxon>Staphylococcaceae</taxon>
        <taxon>Staphylococcus</taxon>
    </lineage>
</organism>
<reference key="1">
    <citation type="book" date="2006" name="Gram positive pathogens, 2nd edition">
        <title>The Staphylococcus aureus NCTC 8325 genome.</title>
        <editorList>
            <person name="Fischetti V."/>
            <person name="Novick R."/>
            <person name="Ferretti J."/>
            <person name="Portnoy D."/>
            <person name="Rood J."/>
        </editorList>
        <authorList>
            <person name="Gillaspy A.F."/>
            <person name="Worrell V."/>
            <person name="Orvis J."/>
            <person name="Roe B.A."/>
            <person name="Dyer D.W."/>
            <person name="Iandolo J.J."/>
        </authorList>
    </citation>
    <scope>NUCLEOTIDE SEQUENCE [LARGE SCALE GENOMIC DNA]</scope>
    <source>
        <strain>NCTC 8325 / PS 47</strain>
    </source>
</reference>
<proteinExistence type="inferred from homology"/>
<comment type="function">
    <text evidence="1">Specifically methylates the N7 position of guanine in position 535 of 16S rRNA.</text>
</comment>
<comment type="subcellular location">
    <subcellularLocation>
        <location evidence="1">Cytoplasm</location>
    </subcellularLocation>
</comment>
<comment type="similarity">
    <text evidence="1">Belongs to the methyltransferase superfamily. RNA methyltransferase RsmG family.</text>
</comment>
<gene>
    <name evidence="1" type="primary">rsmG</name>
    <name type="ordered locus">SAOUHSC_03051</name>
</gene>
<name>RSMG_STAA8</name>
<feature type="chain" id="PRO_1000010215" description="Ribosomal RNA small subunit methyltransferase G">
    <location>
        <begin position="1"/>
        <end position="239"/>
    </location>
</feature>
<feature type="region of interest" description="Disordered" evidence="2">
    <location>
        <begin position="215"/>
        <end position="239"/>
    </location>
</feature>
<feature type="binding site" evidence="1">
    <location>
        <position position="77"/>
    </location>
    <ligand>
        <name>S-adenosyl-L-methionine</name>
        <dbReference type="ChEBI" id="CHEBI:59789"/>
    </ligand>
</feature>
<feature type="binding site" evidence="1">
    <location>
        <position position="82"/>
    </location>
    <ligand>
        <name>S-adenosyl-L-methionine</name>
        <dbReference type="ChEBI" id="CHEBI:59789"/>
    </ligand>
</feature>
<feature type="binding site" evidence="1">
    <location>
        <begin position="128"/>
        <end position="129"/>
    </location>
    <ligand>
        <name>S-adenosyl-L-methionine</name>
        <dbReference type="ChEBI" id="CHEBI:59789"/>
    </ligand>
</feature>
<feature type="binding site" evidence="1">
    <location>
        <position position="146"/>
    </location>
    <ligand>
        <name>S-adenosyl-L-methionine</name>
        <dbReference type="ChEBI" id="CHEBI:59789"/>
    </ligand>
</feature>
<evidence type="ECO:0000255" key="1">
    <source>
        <dbReference type="HAMAP-Rule" id="MF_00074"/>
    </source>
</evidence>
<evidence type="ECO:0000256" key="2">
    <source>
        <dbReference type="SAM" id="MobiDB-lite"/>
    </source>
</evidence>
<dbReference type="EC" id="2.1.1.-" evidence="1"/>
<dbReference type="EMBL" id="CP000253">
    <property type="protein sequence ID" value="ABD32033.1"/>
    <property type="molecule type" value="Genomic_DNA"/>
</dbReference>
<dbReference type="RefSeq" id="WP_000215595.1">
    <property type="nucleotide sequence ID" value="NZ_LS483365.1"/>
</dbReference>
<dbReference type="SMR" id="Q2FUQ4"/>
<dbReference type="STRING" id="93061.SAOUHSC_03051"/>
<dbReference type="PaxDb" id="1280-SAXN108_2988"/>
<dbReference type="KEGG" id="sao:SAOUHSC_03051"/>
<dbReference type="PATRIC" id="fig|93061.5.peg.2756"/>
<dbReference type="eggNOG" id="COG0357">
    <property type="taxonomic scope" value="Bacteria"/>
</dbReference>
<dbReference type="HOGENOM" id="CLU_065341_0_0_9"/>
<dbReference type="OrthoDB" id="9808773at2"/>
<dbReference type="PRO" id="PR:Q2FUQ4"/>
<dbReference type="Proteomes" id="UP000008816">
    <property type="component" value="Chromosome"/>
</dbReference>
<dbReference type="GO" id="GO:0005829">
    <property type="term" value="C:cytosol"/>
    <property type="evidence" value="ECO:0000318"/>
    <property type="project" value="GO_Central"/>
</dbReference>
<dbReference type="GO" id="GO:0070043">
    <property type="term" value="F:rRNA (guanine-N7-)-methyltransferase activity"/>
    <property type="evidence" value="ECO:0000318"/>
    <property type="project" value="GO_Central"/>
</dbReference>
<dbReference type="CDD" id="cd02440">
    <property type="entry name" value="AdoMet_MTases"/>
    <property type="match status" value="1"/>
</dbReference>
<dbReference type="FunFam" id="3.40.50.150:FF:000041">
    <property type="entry name" value="Ribosomal RNA small subunit methyltransferase G"/>
    <property type="match status" value="1"/>
</dbReference>
<dbReference type="Gene3D" id="3.40.50.150">
    <property type="entry name" value="Vaccinia Virus protein VP39"/>
    <property type="match status" value="1"/>
</dbReference>
<dbReference type="HAMAP" id="MF_00074">
    <property type="entry name" value="16SrRNA_methyltr_G"/>
    <property type="match status" value="1"/>
</dbReference>
<dbReference type="InterPro" id="IPR003682">
    <property type="entry name" value="rRNA_ssu_MeTfrase_G"/>
</dbReference>
<dbReference type="InterPro" id="IPR029063">
    <property type="entry name" value="SAM-dependent_MTases_sf"/>
</dbReference>
<dbReference type="NCBIfam" id="TIGR00138">
    <property type="entry name" value="rsmG_gidB"/>
    <property type="match status" value="1"/>
</dbReference>
<dbReference type="PANTHER" id="PTHR31760">
    <property type="entry name" value="S-ADENOSYL-L-METHIONINE-DEPENDENT METHYLTRANSFERASES SUPERFAMILY PROTEIN"/>
    <property type="match status" value="1"/>
</dbReference>
<dbReference type="PANTHER" id="PTHR31760:SF0">
    <property type="entry name" value="S-ADENOSYL-L-METHIONINE-DEPENDENT METHYLTRANSFERASES SUPERFAMILY PROTEIN"/>
    <property type="match status" value="1"/>
</dbReference>
<dbReference type="Pfam" id="PF02527">
    <property type="entry name" value="GidB"/>
    <property type="match status" value="1"/>
</dbReference>
<dbReference type="PIRSF" id="PIRSF003078">
    <property type="entry name" value="GidB"/>
    <property type="match status" value="1"/>
</dbReference>
<dbReference type="SUPFAM" id="SSF53335">
    <property type="entry name" value="S-adenosyl-L-methionine-dependent methyltransferases"/>
    <property type="match status" value="1"/>
</dbReference>